<feature type="chain" id="PRO_0000456377" description="Lamassu protein LmuB">
    <location>
        <begin position="1"/>
        <end position="564"/>
    </location>
</feature>
<reference evidence="4" key="1">
    <citation type="submission" date="2012-04" db="EMBL/GenBank/DDBJ databases">
        <title>The Genome Sequence of Bacillus cereus VD014.</title>
        <authorList>
            <consortium name="The Broad Institute Genome Sequencing Platform"/>
            <consortium name="The Broad Institute Genome Sequencing Center for Infectious Disease"/>
            <person name="Feldgarden M."/>
            <person name="Van der Auwera G.A."/>
            <person name="Mahillon J."/>
            <person name="Duprez V."/>
            <person name="Timmery S."/>
            <person name="Mattelet C."/>
            <person name="Dierick K."/>
            <person name="Sun M."/>
            <person name="Yu Z."/>
            <person name="Zhu L."/>
            <person name="Hu X."/>
            <person name="Shank E.B."/>
            <person name="Swiecicka I."/>
            <person name="Hansen B.M."/>
            <person name="Andrup L."/>
            <person name="Young S.K."/>
            <person name="Zeng Q."/>
            <person name="Gargeya S."/>
            <person name="Fitzgerald M."/>
            <person name="Haas B."/>
            <person name="Abouelleil A."/>
            <person name="Alvarado L."/>
            <person name="Arachchi H.M."/>
            <person name="Berlin A."/>
            <person name="Chapman S.B."/>
            <person name="Goldberg J."/>
            <person name="Griggs A."/>
            <person name="Gujja S."/>
            <person name="Hansen M."/>
            <person name="Howarth C."/>
            <person name="Imamovic A."/>
            <person name="Larimer J."/>
            <person name="McCowen C."/>
            <person name="Montmayeur A."/>
            <person name="Murphy C."/>
            <person name="Neiman D."/>
            <person name="Pearson M."/>
            <person name="Priest M."/>
            <person name="Roberts A."/>
            <person name="Saif S."/>
            <person name="Shea T."/>
            <person name="Sisk P."/>
            <person name="Sykes S."/>
            <person name="Wortman J."/>
            <person name="Nusbaum C."/>
            <person name="Birren B."/>
        </authorList>
    </citation>
    <scope>NUCLEOTIDE SEQUENCE [LARGE SCALE GENOMIC DNA]</scope>
    <source>
        <strain>VD014</strain>
    </source>
</reference>
<reference key="2">
    <citation type="journal article" date="2018" name="Science">
        <title>Systematic discovery of antiphage defense systems in the microbial pangenome.</title>
        <authorList>
            <person name="Doron S."/>
            <person name="Melamed S."/>
            <person name="Ofir G."/>
            <person name="Leavitt A."/>
            <person name="Lopatina A."/>
            <person name="Keren M."/>
            <person name="Amitai G."/>
            <person name="Sorek R."/>
        </authorList>
    </citation>
    <scope>FUNCTION</scope>
    <scope>EXPRESSION IN B.SUBTILIS</scope>
    <source>
        <strain>VD014</strain>
    </source>
</reference>
<comment type="function">
    <text evidence="1 3">Component of antiviral defense system Lamassu type II, composed of LmuA and LmuB. Expression of Lamassu type II in B.subtilis (strain BEST7003) confers resistance to phage SpBeta (PubMed:29371424). May be an ATPase (Probable).</text>
</comment>
<protein>
    <recommendedName>
        <fullName evidence="2">Lamassu protein LmuB</fullName>
    </recommendedName>
    <alternativeName>
        <fullName evidence="3">Putative ATPase LmuB</fullName>
    </alternativeName>
</protein>
<dbReference type="EMBL" id="AHER01000061">
    <property type="protein sequence ID" value="EJR12435.1"/>
    <property type="molecule type" value="Genomic_DNA"/>
</dbReference>
<dbReference type="RefSeq" id="WP_001033433.1">
    <property type="nucleotide sequence ID" value="NZ_JH792026.1"/>
</dbReference>
<dbReference type="PATRIC" id="fig|1053223.3.peg.5729"/>
<dbReference type="HOGENOM" id="CLU_035208_1_0_9"/>
<dbReference type="Proteomes" id="UP000006607">
    <property type="component" value="Unassembled WGS sequence"/>
</dbReference>
<dbReference type="GO" id="GO:0051607">
    <property type="term" value="P:defense response to virus"/>
    <property type="evidence" value="ECO:0007669"/>
    <property type="project" value="UniProtKB-KW"/>
</dbReference>
<dbReference type="Gene3D" id="3.40.50.300">
    <property type="entry name" value="P-loop containing nucleotide triphosphate hydrolases"/>
    <property type="match status" value="1"/>
</dbReference>
<dbReference type="InterPro" id="IPR027417">
    <property type="entry name" value="P-loop_NTPase"/>
</dbReference>
<organism>
    <name type="scientific">Bacillus cereus (strain VD014)</name>
    <dbReference type="NCBI Taxonomy" id="1053223"/>
    <lineage>
        <taxon>Bacteria</taxon>
        <taxon>Bacillati</taxon>
        <taxon>Bacillota</taxon>
        <taxon>Bacilli</taxon>
        <taxon>Bacillales</taxon>
        <taxon>Bacillaceae</taxon>
        <taxon>Bacillus</taxon>
        <taxon>Bacillus cereus group</taxon>
    </lineage>
</organism>
<proteinExistence type="predicted"/>
<keyword id="KW-0051">Antiviral defense</keyword>
<gene>
    <name evidence="2" type="primary">lmuB</name>
    <name evidence="4" type="ORF">IIA_05628</name>
</gene>
<name>LMUB_BACC8</name>
<evidence type="ECO:0000269" key="1">
    <source>
    </source>
</evidence>
<evidence type="ECO:0000303" key="2">
    <source>
    </source>
</evidence>
<evidence type="ECO:0000305" key="3">
    <source>
    </source>
</evidence>
<evidence type="ECO:0000312" key="4">
    <source>
        <dbReference type="EMBL" id="EJR12435.1"/>
    </source>
</evidence>
<sequence length="564" mass="65991">MNKIIIRKLFIFDVIEKKAKSVDFEDGINIVTSKGNQLGKSTIMKSIYYTLGAEVFFADRLNVKSKIHMLETDVNDKKYTFIRHGDVVVIKDGKGIFKTSNASELSSKLHDIFGFSVFLEDKQKKYVIAPPVFRYIPYYIDQDHGWTSELKSFDKLGQFDKKSRDLLFYYHLNILDEDYGVKLKEKKELDASMTDLKTRKKEILGLLAYIRENITAFNLEMDITALQIQKREILNKYKKYSYDLNNIRRKILEYQEEIFKIDNVIDNLNSTLKQNDKVREHIKHQFDVECPYCNNHFEIQAKDILRINYNIVDLEASKLEMLDIKEKLLGKMKKVQKEYEDYQATLKAIEEEKVDSENTLEDILKFKGLQETQNQLNTELVKNTGDIEEKSEDLKEIRRDLKKWQDEIDKVNSRYKDILNLNLIRFNTNEHALPEKYNIGKNLKASGSGQVRVNLARVYSFIKLLEEYNPTGLKYPLVIDSPKGGEQSTTNSELILRLLTEKAQISNQIILATIDFESFYNGDTKKFNIISLENEPYHLLSAEDYQNNQVIIDDFVSLYFEANQ</sequence>
<accession>J8GG30</accession>